<organism>
    <name type="scientific">Homo sapiens</name>
    <name type="common">Human</name>
    <dbReference type="NCBI Taxonomy" id="9606"/>
    <lineage>
        <taxon>Eukaryota</taxon>
        <taxon>Metazoa</taxon>
        <taxon>Chordata</taxon>
        <taxon>Craniata</taxon>
        <taxon>Vertebrata</taxon>
        <taxon>Euteleostomi</taxon>
        <taxon>Mammalia</taxon>
        <taxon>Eutheria</taxon>
        <taxon>Euarchontoglires</taxon>
        <taxon>Primates</taxon>
        <taxon>Haplorrhini</taxon>
        <taxon>Catarrhini</taxon>
        <taxon>Hominidae</taxon>
        <taxon>Homo</taxon>
    </lineage>
</organism>
<dbReference type="EMBL" id="AK096547">
    <property type="status" value="NOT_ANNOTATED_CDS"/>
    <property type="molecule type" value="mRNA"/>
</dbReference>
<dbReference type="EMBL" id="AK314535">
    <property type="protein sequence ID" value="BAG37126.1"/>
    <property type="molecule type" value="mRNA"/>
</dbReference>
<dbReference type="EMBL" id="AL834162">
    <property type="protein sequence ID" value="CAD38866.1"/>
    <property type="molecule type" value="mRNA"/>
</dbReference>
<dbReference type="EMBL" id="AL834351">
    <property type="protein sequence ID" value="CAD39016.1"/>
    <property type="molecule type" value="mRNA"/>
</dbReference>
<dbReference type="EMBL" id="AL834352">
    <property type="protein sequence ID" value="CAD39017.1"/>
    <property type="molecule type" value="mRNA"/>
</dbReference>
<dbReference type="EMBL" id="BX640952">
    <property type="protein sequence ID" value="CAE45976.1"/>
    <property type="molecule type" value="mRNA"/>
</dbReference>
<dbReference type="EMBL" id="AL137523">
    <property type="protein sequence ID" value="CAB70788.3"/>
    <property type="molecule type" value="mRNA"/>
</dbReference>
<dbReference type="EMBL" id="AC037459">
    <property type="status" value="NOT_ANNOTATED_CDS"/>
    <property type="molecule type" value="Genomic_DNA"/>
</dbReference>
<dbReference type="EMBL" id="CH471080">
    <property type="protein sequence ID" value="EAW63658.1"/>
    <property type="molecule type" value="Genomic_DNA"/>
</dbReference>
<dbReference type="EMBL" id="CH471080">
    <property type="protein sequence ID" value="EAW63661.1"/>
    <property type="molecule type" value="Genomic_DNA"/>
</dbReference>
<dbReference type="EMBL" id="BC018269">
    <property type="protein sequence ID" value="AAH18269.2"/>
    <property type="molecule type" value="mRNA"/>
</dbReference>
<dbReference type="EMBL" id="BC065495">
    <property type="protein sequence ID" value="AAH65495.1"/>
    <property type="molecule type" value="mRNA"/>
</dbReference>
<dbReference type="EMBL" id="AB075847">
    <property type="protein sequence ID" value="BAB85553.1"/>
    <property type="status" value="ALT_INIT"/>
    <property type="molecule type" value="mRNA"/>
</dbReference>
<dbReference type="EMBL" id="AF293335">
    <property type="protein sequence ID" value="AAG02472.1"/>
    <property type="status" value="ALT_FRAME"/>
    <property type="molecule type" value="mRNA"/>
</dbReference>
<dbReference type="CCDS" id="CCDS34863.1">
    <molecule id="Q8N163-1"/>
</dbReference>
<dbReference type="PIR" id="T46368">
    <property type="entry name" value="T46368"/>
</dbReference>
<dbReference type="RefSeq" id="NP_001380926.1">
    <molecule id="Q8N163-1"/>
    <property type="nucleotide sequence ID" value="NM_001393997.1"/>
</dbReference>
<dbReference type="RefSeq" id="NP_066997.3">
    <molecule id="Q8N163-1"/>
    <property type="nucleotide sequence ID" value="NM_021174.5"/>
</dbReference>
<dbReference type="PDB" id="8EZ6">
    <property type="method" value="X-ray"/>
    <property type="resolution" value="2.00 A"/>
    <property type="chains" value="A/B=52-120"/>
</dbReference>
<dbReference type="PDBsum" id="8EZ6"/>
<dbReference type="SMR" id="Q8N163"/>
<dbReference type="BioGRID" id="121775">
    <property type="interactions" value="368"/>
</dbReference>
<dbReference type="ComplexPortal" id="CPX-2645">
    <property type="entry name" value="DBIRD complex"/>
</dbReference>
<dbReference type="CORUM" id="Q8N163"/>
<dbReference type="DIP" id="DIP-38122N"/>
<dbReference type="FunCoup" id="Q8N163">
    <property type="interactions" value="3884"/>
</dbReference>
<dbReference type="IntAct" id="Q8N163">
    <property type="interactions" value="156"/>
</dbReference>
<dbReference type="MINT" id="Q8N163"/>
<dbReference type="STRING" id="9606.ENSP00000310670"/>
<dbReference type="ChEMBL" id="CHEMBL5483141"/>
<dbReference type="GlyGen" id="Q8N163">
    <property type="glycosylation" value="1 site, 1 O-linked glycan (1 site)"/>
</dbReference>
<dbReference type="iPTMnet" id="Q8N163"/>
<dbReference type="PhosphoSitePlus" id="Q8N163"/>
<dbReference type="SwissPalm" id="Q8N163"/>
<dbReference type="BioMuta" id="CCAR2"/>
<dbReference type="DMDM" id="85701135"/>
<dbReference type="jPOST" id="Q8N163"/>
<dbReference type="MassIVE" id="Q8N163"/>
<dbReference type="PaxDb" id="9606-ENSP00000310670"/>
<dbReference type="PeptideAtlas" id="Q8N163"/>
<dbReference type="ProteomicsDB" id="71566">
    <molecule id="Q8N163-1"/>
</dbReference>
<dbReference type="ProteomicsDB" id="71567">
    <molecule id="Q8N163-2"/>
</dbReference>
<dbReference type="Pumba" id="Q8N163"/>
<dbReference type="Antibodypedia" id="9629">
    <property type="antibodies" value="320 antibodies from 36 providers"/>
</dbReference>
<dbReference type="CPTC" id="Q8N163">
    <property type="antibodies" value="2 antibodies"/>
</dbReference>
<dbReference type="DNASU" id="57805"/>
<dbReference type="Ensembl" id="ENST00000308511.9">
    <molecule id="Q8N163-1"/>
    <property type="protein sequence ID" value="ENSP00000310670.4"/>
    <property type="gene ID" value="ENSG00000158941.17"/>
</dbReference>
<dbReference type="Ensembl" id="ENST00000389279.7">
    <molecule id="Q8N163-1"/>
    <property type="protein sequence ID" value="ENSP00000373930.3"/>
    <property type="gene ID" value="ENSG00000158941.17"/>
</dbReference>
<dbReference type="GeneID" id="57805"/>
<dbReference type="KEGG" id="hsa:57805"/>
<dbReference type="MANE-Select" id="ENST00000308511.9">
    <property type="protein sequence ID" value="ENSP00000310670.4"/>
    <property type="RefSeq nucleotide sequence ID" value="NM_001393997.1"/>
    <property type="RefSeq protein sequence ID" value="NP_001380926.1"/>
</dbReference>
<dbReference type="UCSC" id="uc003xch.4">
    <molecule id="Q8N163-1"/>
    <property type="organism name" value="human"/>
</dbReference>
<dbReference type="AGR" id="HGNC:23360"/>
<dbReference type="CTD" id="57805"/>
<dbReference type="DisGeNET" id="57805"/>
<dbReference type="GeneCards" id="CCAR2"/>
<dbReference type="HGNC" id="HGNC:23360">
    <property type="gene designation" value="CCAR2"/>
</dbReference>
<dbReference type="HPA" id="ENSG00000158941">
    <property type="expression patterns" value="Low tissue specificity"/>
</dbReference>
<dbReference type="MalaCards" id="CCAR2"/>
<dbReference type="MIM" id="607359">
    <property type="type" value="gene"/>
</dbReference>
<dbReference type="neXtProt" id="NX_Q8N163"/>
<dbReference type="OpenTargets" id="ENSG00000158941"/>
<dbReference type="PharmGKB" id="PA134993792"/>
<dbReference type="VEuPathDB" id="HostDB:ENSG00000158941"/>
<dbReference type="eggNOG" id="KOG4246">
    <property type="taxonomic scope" value="Eukaryota"/>
</dbReference>
<dbReference type="GeneTree" id="ENSGT00530000063672"/>
<dbReference type="HOGENOM" id="CLU_008030_2_0_1"/>
<dbReference type="InParanoid" id="Q8N163"/>
<dbReference type="OMA" id="WDALCQQ"/>
<dbReference type="OrthoDB" id="21006at2759"/>
<dbReference type="PAN-GO" id="Q8N163">
    <property type="GO annotations" value="6 GO annotations based on evolutionary models"/>
</dbReference>
<dbReference type="PhylomeDB" id="Q8N163"/>
<dbReference type="TreeFam" id="TF316387"/>
<dbReference type="PathwayCommons" id="Q8N163"/>
<dbReference type="Reactome" id="R-HSA-3371453">
    <property type="pathway name" value="Regulation of HSF1-mediated heat shock response"/>
</dbReference>
<dbReference type="SignaLink" id="Q8N163"/>
<dbReference type="SIGNOR" id="Q8N163"/>
<dbReference type="BioGRID-ORCS" id="57805">
    <property type="hits" value="35 hits in 1147 CRISPR screens"/>
</dbReference>
<dbReference type="CD-CODE" id="232F8A39">
    <property type="entry name" value="P-body"/>
</dbReference>
<dbReference type="CD-CODE" id="62EA6512">
    <property type="entry name" value="Sam68 nuclear body"/>
</dbReference>
<dbReference type="ChiTaRS" id="CCAR2">
    <property type="organism name" value="human"/>
</dbReference>
<dbReference type="GeneWiki" id="KIAA1967"/>
<dbReference type="GenomeRNAi" id="57805"/>
<dbReference type="Pharos" id="Q8N163">
    <property type="development level" value="Tbio"/>
</dbReference>
<dbReference type="PRO" id="PR:Q8N163"/>
<dbReference type="Proteomes" id="UP000005640">
    <property type="component" value="Chromosome 8"/>
</dbReference>
<dbReference type="RNAct" id="Q8N163">
    <property type="molecule type" value="protein"/>
</dbReference>
<dbReference type="Bgee" id="ENSG00000158941">
    <property type="expression patterns" value="Expressed in cortical plate and 175 other cell types or tissues"/>
</dbReference>
<dbReference type="ExpressionAtlas" id="Q8N163">
    <property type="expression patterns" value="baseline and differential"/>
</dbReference>
<dbReference type="GO" id="GO:0000785">
    <property type="term" value="C:chromatin"/>
    <property type="evidence" value="ECO:0000314"/>
    <property type="project" value="UniProtKB"/>
</dbReference>
<dbReference type="GO" id="GO:0005737">
    <property type="term" value="C:cytoplasm"/>
    <property type="evidence" value="ECO:0000314"/>
    <property type="project" value="UniProtKB"/>
</dbReference>
<dbReference type="GO" id="GO:0044609">
    <property type="term" value="C:DBIRD complex"/>
    <property type="evidence" value="ECO:0000314"/>
    <property type="project" value="UniProtKB"/>
</dbReference>
<dbReference type="GO" id="GO:0005759">
    <property type="term" value="C:mitochondrial matrix"/>
    <property type="evidence" value="ECO:0000314"/>
    <property type="project" value="UniProtKB"/>
</dbReference>
<dbReference type="GO" id="GO:0005654">
    <property type="term" value="C:nucleoplasm"/>
    <property type="evidence" value="ECO:0000314"/>
    <property type="project" value="HPA"/>
</dbReference>
<dbReference type="GO" id="GO:0005634">
    <property type="term" value="C:nucleus"/>
    <property type="evidence" value="ECO:0000314"/>
    <property type="project" value="UniProtKB"/>
</dbReference>
<dbReference type="GO" id="GO:0005819">
    <property type="term" value="C:spindle"/>
    <property type="evidence" value="ECO:0000314"/>
    <property type="project" value="UniProtKB"/>
</dbReference>
<dbReference type="GO" id="GO:0000774">
    <property type="term" value="F:adenyl-nucleotide exchange factor activity"/>
    <property type="evidence" value="ECO:0000318"/>
    <property type="project" value="GO_Central"/>
</dbReference>
<dbReference type="GO" id="GO:0019899">
    <property type="term" value="F:enzyme binding"/>
    <property type="evidence" value="ECO:0000353"/>
    <property type="project" value="UniProtKB"/>
</dbReference>
<dbReference type="GO" id="GO:0004857">
    <property type="term" value="F:enzyme inhibitor activity"/>
    <property type="evidence" value="ECO:0000314"/>
    <property type="project" value="UniProtKB"/>
</dbReference>
<dbReference type="GO" id="GO:0003723">
    <property type="term" value="F:RNA binding"/>
    <property type="evidence" value="ECO:0007005"/>
    <property type="project" value="UniProtKB"/>
</dbReference>
<dbReference type="GO" id="GO:0000993">
    <property type="term" value="F:RNA polymerase II complex binding"/>
    <property type="evidence" value="ECO:0000314"/>
    <property type="project" value="UniProtKB"/>
</dbReference>
<dbReference type="GO" id="GO:0051082">
    <property type="term" value="F:unfolded protein binding"/>
    <property type="evidence" value="ECO:0000318"/>
    <property type="project" value="GO_Central"/>
</dbReference>
<dbReference type="GO" id="GO:0006974">
    <property type="term" value="P:DNA damage response"/>
    <property type="evidence" value="ECO:0007669"/>
    <property type="project" value="UniProtKB-KW"/>
</dbReference>
<dbReference type="GO" id="GO:0043653">
    <property type="term" value="P:mitochondrial fragmentation involved in apoptotic process"/>
    <property type="evidence" value="ECO:0000314"/>
    <property type="project" value="UniProtKB"/>
</dbReference>
<dbReference type="GO" id="GO:0006397">
    <property type="term" value="P:mRNA processing"/>
    <property type="evidence" value="ECO:0007669"/>
    <property type="project" value="UniProtKB-KW"/>
</dbReference>
<dbReference type="GO" id="GO:0043086">
    <property type="term" value="P:negative regulation of catalytic activity"/>
    <property type="evidence" value="ECO:0000315"/>
    <property type="project" value="UniProtKB"/>
</dbReference>
<dbReference type="GO" id="GO:0030308">
    <property type="term" value="P:negative regulation of cell growth"/>
    <property type="evidence" value="ECO:0000315"/>
    <property type="project" value="UniProtKB"/>
</dbReference>
<dbReference type="GO" id="GO:0045892">
    <property type="term" value="P:negative regulation of DNA-templated transcription"/>
    <property type="evidence" value="ECO:0000314"/>
    <property type="project" value="UniProtKB"/>
</dbReference>
<dbReference type="GO" id="GO:1902230">
    <property type="term" value="P:negative regulation of intrinsic apoptotic signaling pathway in response to DNA damage"/>
    <property type="evidence" value="ECO:0000315"/>
    <property type="project" value="UniProtKB"/>
</dbReference>
<dbReference type="GO" id="GO:0032435">
    <property type="term" value="P:negative regulation of proteasomal ubiquitin-dependent protein catabolic process"/>
    <property type="evidence" value="ECO:0000314"/>
    <property type="project" value="UniProtKB"/>
</dbReference>
<dbReference type="GO" id="GO:0043065">
    <property type="term" value="P:positive regulation of apoptotic process"/>
    <property type="evidence" value="ECO:0000315"/>
    <property type="project" value="UniProtKB"/>
</dbReference>
<dbReference type="GO" id="GO:0090263">
    <property type="term" value="P:positive regulation of canonical Wnt signaling pathway"/>
    <property type="evidence" value="ECO:0000315"/>
    <property type="project" value="UniProtKB"/>
</dbReference>
<dbReference type="GO" id="GO:2000003">
    <property type="term" value="P:positive regulation of DNA damage checkpoint"/>
    <property type="evidence" value="ECO:0000315"/>
    <property type="project" value="UniProtKB"/>
</dbReference>
<dbReference type="GO" id="GO:0042752">
    <property type="term" value="P:regulation of circadian rhythm"/>
    <property type="evidence" value="ECO:0000250"/>
    <property type="project" value="UniProtKB"/>
</dbReference>
<dbReference type="GO" id="GO:0032784">
    <property type="term" value="P:regulation of DNA-templated transcription elongation"/>
    <property type="evidence" value="ECO:0000315"/>
    <property type="project" value="UniProtKB"/>
</dbReference>
<dbReference type="GO" id="GO:0090311">
    <property type="term" value="P:regulation of protein deacetylation"/>
    <property type="evidence" value="ECO:0000314"/>
    <property type="project" value="UniProtKB"/>
</dbReference>
<dbReference type="GO" id="GO:0031647">
    <property type="term" value="P:regulation of protein stability"/>
    <property type="evidence" value="ECO:0000314"/>
    <property type="project" value="UniProtKB"/>
</dbReference>
<dbReference type="GO" id="GO:0009411">
    <property type="term" value="P:response to UV"/>
    <property type="evidence" value="ECO:0000315"/>
    <property type="project" value="UniProtKB"/>
</dbReference>
<dbReference type="GO" id="GO:0048511">
    <property type="term" value="P:rhythmic process"/>
    <property type="evidence" value="ECO:0007669"/>
    <property type="project" value="UniProtKB-KW"/>
</dbReference>
<dbReference type="GO" id="GO:0008380">
    <property type="term" value="P:RNA splicing"/>
    <property type="evidence" value="ECO:0000315"/>
    <property type="project" value="UniProtKB"/>
</dbReference>
<dbReference type="GO" id="GO:0016055">
    <property type="term" value="P:Wnt signaling pathway"/>
    <property type="evidence" value="ECO:0007669"/>
    <property type="project" value="UniProtKB-KW"/>
</dbReference>
<dbReference type="InterPro" id="IPR045354">
    <property type="entry name" value="BURAN"/>
</dbReference>
<dbReference type="InterPro" id="IPR025224">
    <property type="entry name" value="CCAR1/CCAR2"/>
</dbReference>
<dbReference type="InterPro" id="IPR025954">
    <property type="entry name" value="DBC1/CARP1_inactive_NUDIX_dom"/>
</dbReference>
<dbReference type="InterPro" id="IPR011992">
    <property type="entry name" value="EF-hand-dom_pair"/>
</dbReference>
<dbReference type="InterPro" id="IPR045353">
    <property type="entry name" value="LAIKA"/>
</dbReference>
<dbReference type="InterPro" id="IPR025223">
    <property type="entry name" value="S1-like_RNA-bd_dom"/>
</dbReference>
<dbReference type="PANTHER" id="PTHR14304:SF12">
    <property type="entry name" value="CELL CYCLE AND APOPTOSIS REGULATOR PROTEIN 2"/>
    <property type="match status" value="1"/>
</dbReference>
<dbReference type="PANTHER" id="PTHR14304">
    <property type="entry name" value="CELL DIVISION CYCLE AND APOPTOSIS REGULATOR PROTEIN"/>
    <property type="match status" value="1"/>
</dbReference>
<dbReference type="Pfam" id="PF19257">
    <property type="entry name" value="BURAN"/>
    <property type="match status" value="1"/>
</dbReference>
<dbReference type="Pfam" id="PF14443">
    <property type="entry name" value="DBC1"/>
    <property type="match status" value="1"/>
</dbReference>
<dbReference type="Pfam" id="PF19256">
    <property type="entry name" value="LAIKA"/>
    <property type="match status" value="1"/>
</dbReference>
<dbReference type="Pfam" id="PF14444">
    <property type="entry name" value="S1-like"/>
    <property type="match status" value="1"/>
</dbReference>
<dbReference type="SMART" id="SM01122">
    <property type="entry name" value="DBC1"/>
    <property type="match status" value="1"/>
</dbReference>
<dbReference type="SUPFAM" id="SSF47473">
    <property type="entry name" value="EF-hand"/>
    <property type="match status" value="1"/>
</dbReference>
<feature type="chain" id="PRO_0000050813" description="Cell cycle and apoptosis regulator protein 2">
    <location>
        <begin position="1"/>
        <end position="923"/>
    </location>
</feature>
<feature type="region of interest" description="Disordered" evidence="3">
    <location>
        <begin position="1"/>
        <end position="35"/>
    </location>
</feature>
<feature type="region of interest" description="Disordered" evidence="3">
    <location>
        <begin position="178"/>
        <end position="218"/>
    </location>
</feature>
<feature type="region of interest" description="Disordered" evidence="3">
    <location>
        <begin position="446"/>
        <end position="510"/>
    </location>
</feature>
<feature type="region of interest" description="Disordered" evidence="3">
    <location>
        <begin position="568"/>
        <end position="643"/>
    </location>
</feature>
<feature type="region of interest" description="Interaction with MCC" evidence="19">
    <location>
        <begin position="610"/>
        <end position="670"/>
    </location>
</feature>
<feature type="region of interest" description="Interaction with NR1D1" evidence="16">
    <location>
        <begin position="704"/>
        <end position="923"/>
    </location>
</feature>
<feature type="coiled-coil region" evidence="2">
    <location>
        <begin position="829"/>
        <end position="909"/>
    </location>
</feature>
<feature type="compositionally biased region" description="Basic and acidic residues" evidence="3">
    <location>
        <begin position="188"/>
        <end position="200"/>
    </location>
</feature>
<feature type="compositionally biased region" description="Low complexity" evidence="3">
    <location>
        <begin position="446"/>
        <end position="458"/>
    </location>
</feature>
<feature type="compositionally biased region" description="Basic and acidic residues" evidence="3">
    <location>
        <begin position="572"/>
        <end position="602"/>
    </location>
</feature>
<feature type="modified residue" description="Phosphothreonine" evidence="30 31">
    <location>
        <position position="35"/>
    </location>
</feature>
<feature type="modified residue" description="N6-acetyllysine; by KAT8" evidence="17">
    <location>
        <position position="112"/>
    </location>
</feature>
<feature type="modified residue" description="N6-methyllysine" evidence="34">
    <location>
        <position position="123"/>
    </location>
</feature>
<feature type="modified residue" description="Phosphoserine" evidence="28 31 33">
    <location>
        <position position="124"/>
    </location>
</feature>
<feature type="modified residue" description="Omega-N-methylarginine" evidence="34">
    <location>
        <position position="180"/>
    </location>
</feature>
<feature type="modified residue" description="N6-acetyllysine; by KAT8" evidence="17 29">
    <location>
        <position position="215"/>
    </location>
</feature>
<feature type="modified residue" description="Phosphothreonine; by ATM, ATR and CK2" evidence="14 20 33">
    <location>
        <position position="454"/>
    </location>
</feature>
<feature type="modified residue" description="Phosphothreonine" evidence="35">
    <location>
        <position position="484"/>
    </location>
</feature>
<feature type="modified residue" description="Phosphoserine" evidence="33 35">
    <location>
        <position position="569"/>
    </location>
</feature>
<feature type="modified residue" description="Phosphoserine" evidence="35">
    <location>
        <position position="627"/>
    </location>
</feature>
<feature type="modified residue" description="Phosphoserine" evidence="27 28 30 31 33">
    <location>
        <position position="675"/>
    </location>
</feature>
<feature type="modified residue" description="Phosphoserine" evidence="27 28 30 31 32 33">
    <location>
        <position position="678"/>
    </location>
</feature>
<feature type="modified residue" description="Phosphoserine" evidence="27 28 30 31 33">
    <location>
        <position position="681"/>
    </location>
</feature>
<feature type="modified residue" description="Phosphoserine" evidence="33 35">
    <location>
        <position position="687"/>
    </location>
</feature>
<feature type="modified residue" description="Phosphoserine" evidence="33">
    <location>
        <position position="808"/>
    </location>
</feature>
<feature type="modified residue" description="Phosphothreonine" evidence="33">
    <location>
        <position position="897"/>
    </location>
</feature>
<feature type="cross-link" description="Glycyl lysine isopeptide (Lys-Gly) (interchain with G-Cter in SUMO2 and SUMO3); alternate" evidence="22">
    <location>
        <position position="591"/>
    </location>
</feature>
<feature type="cross-link" description="Glycyl lysine isopeptide (Lys-Gly) (interchain with G-Cter in SUMO2); alternate" evidence="36 37">
    <location>
        <position position="591"/>
    </location>
</feature>
<feature type="splice variant" id="VSP_017092" description="In isoform 2." evidence="25">
    <original>ADSWVEKEEPAPSN</original>
    <variation>VRWGWTRRQHSSFP</variation>
    <location>
        <begin position="910"/>
        <end position="923"/>
    </location>
</feature>
<feature type="mutagenesis site" description="Abolishes binding to SIRT1." evidence="5">
    <location>
        <begin position="243"/>
        <end position="264"/>
    </location>
</feature>
<feature type="mutagenesis site" description="Significantly reduces association with SIRT1. Decreases sumoylation and the interaction of the sumoylated form with SIRT1. Inhibits CCAR2-PSIA3 interaction. Increases CCAR2-SENP1 interaction. Down-regulation of the signals related with the epithelial-mesenchymal transition of gastric cancer cells." evidence="14 20 22">
    <original>T</original>
    <variation>A</variation>
    <location>
        <position position="454"/>
    </location>
</feature>
<feature type="mutagenesis site" description="Significantly increases association with SIRT1 and induces p53 acetylation and apoptosis. Increases sumoylation and the interaction of the sumoylated form with SIRT1. Promotes CCAR2-PSIA3 interaction. Decreases CCAR2-SENP1 interaction." evidence="14 22">
    <original>T</original>
    <variation>D</variation>
    <location>
        <position position="454"/>
    </location>
</feature>
<feature type="mutagenesis site" description="Loss of sumoylation." evidence="22">
    <original>K</original>
    <variation>R</variation>
    <location>
        <position position="591"/>
    </location>
</feature>
<feature type="mutagenesis site" description="No effect on sumoylation." evidence="22">
    <original>K</original>
    <variation>R</variation>
    <location>
        <position position="667"/>
    </location>
</feature>
<feature type="mutagenesis site" description="No effect on sumoylation." evidence="22">
    <original>K</original>
    <variation>R</variation>
    <location>
        <position position="839"/>
    </location>
</feature>
<feature type="sequence conflict" description="In Ref. 2; CAD38866/CAD39017." evidence="26" ref="2">
    <original>R</original>
    <variation>S</variation>
    <location>
        <position position="47"/>
    </location>
</feature>
<feature type="sequence conflict" description="In Ref. 5; AAH65495." evidence="26" ref="5">
    <original>T</original>
    <variation>S</variation>
    <location>
        <position position="850"/>
    </location>
</feature>
<feature type="sequence conflict" description="In Ref. 2; CAD38866/CAD39017." evidence="26" ref="2">
    <original>E</original>
    <variation>G</variation>
    <location>
        <position position="908"/>
    </location>
</feature>
<feature type="strand" evidence="38">
    <location>
        <begin position="55"/>
        <end position="65"/>
    </location>
</feature>
<feature type="strand" evidence="38">
    <location>
        <begin position="67"/>
        <end position="72"/>
    </location>
</feature>
<feature type="turn" evidence="38">
    <location>
        <begin position="73"/>
        <end position="75"/>
    </location>
</feature>
<feature type="strand" evidence="38">
    <location>
        <begin position="76"/>
        <end position="79"/>
    </location>
</feature>
<feature type="helix" evidence="38">
    <location>
        <begin position="80"/>
        <end position="82"/>
    </location>
</feature>
<feature type="strand" evidence="38">
    <location>
        <begin position="93"/>
        <end position="100"/>
    </location>
</feature>
<feature type="strand" evidence="38">
    <location>
        <begin position="102"/>
        <end position="106"/>
    </location>
</feature>
<feature type="strand" evidence="38">
    <location>
        <begin position="108"/>
        <end position="115"/>
    </location>
</feature>
<evidence type="ECO:0000250" key="1">
    <source>
        <dbReference type="UniProtKB" id="Q8VDP4"/>
    </source>
</evidence>
<evidence type="ECO:0000255" key="2"/>
<evidence type="ECO:0000256" key="3">
    <source>
        <dbReference type="SAM" id="MobiDB-lite"/>
    </source>
</evidence>
<evidence type="ECO:0000269" key="4">
    <source>
    </source>
</evidence>
<evidence type="ECO:0000269" key="5">
    <source>
    </source>
</evidence>
<evidence type="ECO:0000269" key="6">
    <source>
    </source>
</evidence>
<evidence type="ECO:0000269" key="7">
    <source>
    </source>
</evidence>
<evidence type="ECO:0000269" key="8">
    <source>
    </source>
</evidence>
<evidence type="ECO:0000269" key="9">
    <source>
    </source>
</evidence>
<evidence type="ECO:0000269" key="10">
    <source>
    </source>
</evidence>
<evidence type="ECO:0000269" key="11">
    <source>
    </source>
</evidence>
<evidence type="ECO:0000269" key="12">
    <source>
    </source>
</evidence>
<evidence type="ECO:0000269" key="13">
    <source>
    </source>
</evidence>
<evidence type="ECO:0000269" key="14">
    <source>
    </source>
</evidence>
<evidence type="ECO:0000269" key="15">
    <source>
    </source>
</evidence>
<evidence type="ECO:0000269" key="16">
    <source>
    </source>
</evidence>
<evidence type="ECO:0000269" key="17">
    <source>
    </source>
</evidence>
<evidence type="ECO:0000269" key="18">
    <source>
    </source>
</evidence>
<evidence type="ECO:0000269" key="19">
    <source>
    </source>
</evidence>
<evidence type="ECO:0000269" key="20">
    <source>
    </source>
</evidence>
<evidence type="ECO:0000269" key="21">
    <source>
    </source>
</evidence>
<evidence type="ECO:0000269" key="22">
    <source>
    </source>
</evidence>
<evidence type="ECO:0000269" key="23">
    <source>
    </source>
</evidence>
<evidence type="ECO:0000269" key="24">
    <source>
    </source>
</evidence>
<evidence type="ECO:0000303" key="25">
    <source>
    </source>
</evidence>
<evidence type="ECO:0000305" key="26"/>
<evidence type="ECO:0007744" key="27">
    <source>
    </source>
</evidence>
<evidence type="ECO:0007744" key="28">
    <source>
    </source>
</evidence>
<evidence type="ECO:0007744" key="29">
    <source>
    </source>
</evidence>
<evidence type="ECO:0007744" key="30">
    <source>
    </source>
</evidence>
<evidence type="ECO:0007744" key="31">
    <source>
    </source>
</evidence>
<evidence type="ECO:0007744" key="32">
    <source>
    </source>
</evidence>
<evidence type="ECO:0007744" key="33">
    <source>
    </source>
</evidence>
<evidence type="ECO:0007744" key="34">
    <source>
    </source>
</evidence>
<evidence type="ECO:0007744" key="35">
    <source>
    </source>
</evidence>
<evidence type="ECO:0007744" key="36">
    <source>
    </source>
</evidence>
<evidence type="ECO:0007744" key="37">
    <source>
    </source>
</evidence>
<evidence type="ECO:0007829" key="38">
    <source>
        <dbReference type="PDB" id="8EZ6"/>
    </source>
</evidence>
<accession>Q8N163</accession>
<accession>A6NL03</accession>
<accession>B2RB79</accession>
<accession>D3DSR6</accession>
<accession>Q6P0Q9</accession>
<accession>Q8N3G7</accession>
<accession>Q8N8M1</accession>
<accession>Q8TF34</accession>
<accession>Q9H9Q9</accession>
<accession>Q9HD12</accession>
<accession>Q9NT55</accession>
<keyword id="KW-0002">3D-structure</keyword>
<keyword id="KW-0007">Acetylation</keyword>
<keyword id="KW-0010">Activator</keyword>
<keyword id="KW-0025">Alternative splicing</keyword>
<keyword id="KW-0053">Apoptosis</keyword>
<keyword id="KW-0090">Biological rhythms</keyword>
<keyword id="KW-0131">Cell cycle</keyword>
<keyword id="KW-0175">Coiled coil</keyword>
<keyword id="KW-0963">Cytoplasm</keyword>
<keyword id="KW-0206">Cytoskeleton</keyword>
<keyword id="KW-0227">DNA damage</keyword>
<keyword id="KW-1017">Isopeptide bond</keyword>
<keyword id="KW-0481">Metalloenzyme inhibitor</keyword>
<keyword id="KW-0488">Methylation</keyword>
<keyword id="KW-0507">mRNA processing</keyword>
<keyword id="KW-0508">mRNA splicing</keyword>
<keyword id="KW-0539">Nucleus</keyword>
<keyword id="KW-0597">Phosphoprotein</keyword>
<keyword id="KW-1267">Proteomics identification</keyword>
<keyword id="KW-1185">Reference proteome</keyword>
<keyword id="KW-0678">Repressor</keyword>
<keyword id="KW-0804">Transcription</keyword>
<keyword id="KW-0805">Transcription regulation</keyword>
<keyword id="KW-0043">Tumor suppressor</keyword>
<keyword id="KW-0832">Ubl conjugation</keyword>
<keyword id="KW-0879">Wnt signaling pathway</keyword>
<name>CCAR2_HUMAN</name>
<reference key="1">
    <citation type="journal article" date="2004" name="Nat. Genet.">
        <title>Complete sequencing and characterization of 21,243 full-length human cDNAs.</title>
        <authorList>
            <person name="Ota T."/>
            <person name="Suzuki Y."/>
            <person name="Nishikawa T."/>
            <person name="Otsuki T."/>
            <person name="Sugiyama T."/>
            <person name="Irie R."/>
            <person name="Wakamatsu A."/>
            <person name="Hayashi K."/>
            <person name="Sato H."/>
            <person name="Nagai K."/>
            <person name="Kimura K."/>
            <person name="Makita H."/>
            <person name="Sekine M."/>
            <person name="Obayashi M."/>
            <person name="Nishi T."/>
            <person name="Shibahara T."/>
            <person name="Tanaka T."/>
            <person name="Ishii S."/>
            <person name="Yamamoto J."/>
            <person name="Saito K."/>
            <person name="Kawai Y."/>
            <person name="Isono Y."/>
            <person name="Nakamura Y."/>
            <person name="Nagahari K."/>
            <person name="Murakami K."/>
            <person name="Yasuda T."/>
            <person name="Iwayanagi T."/>
            <person name="Wagatsuma M."/>
            <person name="Shiratori A."/>
            <person name="Sudo H."/>
            <person name="Hosoiri T."/>
            <person name="Kaku Y."/>
            <person name="Kodaira H."/>
            <person name="Kondo H."/>
            <person name="Sugawara M."/>
            <person name="Takahashi M."/>
            <person name="Kanda K."/>
            <person name="Yokoi T."/>
            <person name="Furuya T."/>
            <person name="Kikkawa E."/>
            <person name="Omura Y."/>
            <person name="Abe K."/>
            <person name="Kamihara K."/>
            <person name="Katsuta N."/>
            <person name="Sato K."/>
            <person name="Tanikawa M."/>
            <person name="Yamazaki M."/>
            <person name="Ninomiya K."/>
            <person name="Ishibashi T."/>
            <person name="Yamashita H."/>
            <person name="Murakawa K."/>
            <person name="Fujimori K."/>
            <person name="Tanai H."/>
            <person name="Kimata M."/>
            <person name="Watanabe M."/>
            <person name="Hiraoka S."/>
            <person name="Chiba Y."/>
            <person name="Ishida S."/>
            <person name="Ono Y."/>
            <person name="Takiguchi S."/>
            <person name="Watanabe S."/>
            <person name="Yosida M."/>
            <person name="Hotuta T."/>
            <person name="Kusano J."/>
            <person name="Kanehori K."/>
            <person name="Takahashi-Fujii A."/>
            <person name="Hara H."/>
            <person name="Tanase T.-O."/>
            <person name="Nomura Y."/>
            <person name="Togiya S."/>
            <person name="Komai F."/>
            <person name="Hara R."/>
            <person name="Takeuchi K."/>
            <person name="Arita M."/>
            <person name="Imose N."/>
            <person name="Musashino K."/>
            <person name="Yuuki H."/>
            <person name="Oshima A."/>
            <person name="Sasaki N."/>
            <person name="Aotsuka S."/>
            <person name="Yoshikawa Y."/>
            <person name="Matsunawa H."/>
            <person name="Ichihara T."/>
            <person name="Shiohata N."/>
            <person name="Sano S."/>
            <person name="Moriya S."/>
            <person name="Momiyama H."/>
            <person name="Satoh N."/>
            <person name="Takami S."/>
            <person name="Terashima Y."/>
            <person name="Suzuki O."/>
            <person name="Nakagawa S."/>
            <person name="Senoh A."/>
            <person name="Mizoguchi H."/>
            <person name="Goto Y."/>
            <person name="Shimizu F."/>
            <person name="Wakebe H."/>
            <person name="Hishigaki H."/>
            <person name="Watanabe T."/>
            <person name="Sugiyama A."/>
            <person name="Takemoto M."/>
            <person name="Kawakami B."/>
            <person name="Yamazaki M."/>
            <person name="Watanabe K."/>
            <person name="Kumagai A."/>
            <person name="Itakura S."/>
            <person name="Fukuzumi Y."/>
            <person name="Fujimori Y."/>
            <person name="Komiyama M."/>
            <person name="Tashiro H."/>
            <person name="Tanigami A."/>
            <person name="Fujiwara T."/>
            <person name="Ono T."/>
            <person name="Yamada K."/>
            <person name="Fujii Y."/>
            <person name="Ozaki K."/>
            <person name="Hirao M."/>
            <person name="Ohmori Y."/>
            <person name="Kawabata A."/>
            <person name="Hikiji T."/>
            <person name="Kobatake N."/>
            <person name="Inagaki H."/>
            <person name="Ikema Y."/>
            <person name="Okamoto S."/>
            <person name="Okitani R."/>
            <person name="Kawakami T."/>
            <person name="Noguchi S."/>
            <person name="Itoh T."/>
            <person name="Shigeta K."/>
            <person name="Senba T."/>
            <person name="Matsumura K."/>
            <person name="Nakajima Y."/>
            <person name="Mizuno T."/>
            <person name="Morinaga M."/>
            <person name="Sasaki M."/>
            <person name="Togashi T."/>
            <person name="Oyama M."/>
            <person name="Hata H."/>
            <person name="Watanabe M."/>
            <person name="Komatsu T."/>
            <person name="Mizushima-Sugano J."/>
            <person name="Satoh T."/>
            <person name="Shirai Y."/>
            <person name="Takahashi Y."/>
            <person name="Nakagawa K."/>
            <person name="Okumura K."/>
            <person name="Nagase T."/>
            <person name="Nomura N."/>
            <person name="Kikuchi H."/>
            <person name="Masuho Y."/>
            <person name="Yamashita R."/>
            <person name="Nakai K."/>
            <person name="Yada T."/>
            <person name="Nakamura Y."/>
            <person name="Ohara O."/>
            <person name="Isogai T."/>
            <person name="Sugano S."/>
        </authorList>
    </citation>
    <scope>NUCLEOTIDE SEQUENCE [LARGE SCALE MRNA] (ISOFORM 1)</scope>
    <source>
        <tissue>Placenta</tissue>
    </source>
</reference>
<reference key="2">
    <citation type="journal article" date="2007" name="BMC Genomics">
        <title>The full-ORF clone resource of the German cDNA consortium.</title>
        <authorList>
            <person name="Bechtel S."/>
            <person name="Rosenfelder H."/>
            <person name="Duda A."/>
            <person name="Schmidt C.P."/>
            <person name="Ernst U."/>
            <person name="Wellenreuther R."/>
            <person name="Mehrle A."/>
            <person name="Schuster C."/>
            <person name="Bahr A."/>
            <person name="Bloecker H."/>
            <person name="Heubner D."/>
            <person name="Hoerlein A."/>
            <person name="Michel G."/>
            <person name="Wedler H."/>
            <person name="Koehrer K."/>
            <person name="Ottenwaelder B."/>
            <person name="Poustka A."/>
            <person name="Wiemann S."/>
            <person name="Schupp I."/>
        </authorList>
    </citation>
    <scope>NUCLEOTIDE SEQUENCE [LARGE SCALE MRNA] (ISOFORM 1)</scope>
    <source>
        <tissue>Amygdala</tissue>
        <tissue>Testis</tissue>
    </source>
</reference>
<reference key="3">
    <citation type="journal article" date="2006" name="Nature">
        <title>DNA sequence and analysis of human chromosome 8.</title>
        <authorList>
            <person name="Nusbaum C."/>
            <person name="Mikkelsen T.S."/>
            <person name="Zody M.C."/>
            <person name="Asakawa S."/>
            <person name="Taudien S."/>
            <person name="Garber M."/>
            <person name="Kodira C.D."/>
            <person name="Schueler M.G."/>
            <person name="Shimizu A."/>
            <person name="Whittaker C.A."/>
            <person name="Chang J.L."/>
            <person name="Cuomo C.A."/>
            <person name="Dewar K."/>
            <person name="FitzGerald M.G."/>
            <person name="Yang X."/>
            <person name="Allen N.R."/>
            <person name="Anderson S."/>
            <person name="Asakawa T."/>
            <person name="Blechschmidt K."/>
            <person name="Bloom T."/>
            <person name="Borowsky M.L."/>
            <person name="Butler J."/>
            <person name="Cook A."/>
            <person name="Corum B."/>
            <person name="DeArellano K."/>
            <person name="DeCaprio D."/>
            <person name="Dooley K.T."/>
            <person name="Dorris L. III"/>
            <person name="Engels R."/>
            <person name="Gloeckner G."/>
            <person name="Hafez N."/>
            <person name="Hagopian D.S."/>
            <person name="Hall J.L."/>
            <person name="Ishikawa S.K."/>
            <person name="Jaffe D.B."/>
            <person name="Kamat A."/>
            <person name="Kudoh J."/>
            <person name="Lehmann R."/>
            <person name="Lokitsang T."/>
            <person name="Macdonald P."/>
            <person name="Major J.E."/>
            <person name="Matthews C.D."/>
            <person name="Mauceli E."/>
            <person name="Menzel U."/>
            <person name="Mihalev A.H."/>
            <person name="Minoshima S."/>
            <person name="Murayama Y."/>
            <person name="Naylor J.W."/>
            <person name="Nicol R."/>
            <person name="Nguyen C."/>
            <person name="O'Leary S.B."/>
            <person name="O'Neill K."/>
            <person name="Parker S.C.J."/>
            <person name="Polley A."/>
            <person name="Raymond C.K."/>
            <person name="Reichwald K."/>
            <person name="Rodriguez J."/>
            <person name="Sasaki T."/>
            <person name="Schilhabel M."/>
            <person name="Siddiqui R."/>
            <person name="Smith C.L."/>
            <person name="Sneddon T.P."/>
            <person name="Talamas J.A."/>
            <person name="Tenzin P."/>
            <person name="Topham K."/>
            <person name="Venkataraman V."/>
            <person name="Wen G."/>
            <person name="Yamazaki S."/>
            <person name="Young S.K."/>
            <person name="Zeng Q."/>
            <person name="Zimmer A.R."/>
            <person name="Rosenthal A."/>
            <person name="Birren B.W."/>
            <person name="Platzer M."/>
            <person name="Shimizu N."/>
            <person name="Lander E.S."/>
        </authorList>
    </citation>
    <scope>NUCLEOTIDE SEQUENCE [LARGE SCALE GENOMIC DNA]</scope>
</reference>
<reference key="4">
    <citation type="submission" date="2005-09" db="EMBL/GenBank/DDBJ databases">
        <authorList>
            <person name="Mural R.J."/>
            <person name="Istrail S."/>
            <person name="Sutton G.G."/>
            <person name="Florea L."/>
            <person name="Halpern A.L."/>
            <person name="Mobarry C.M."/>
            <person name="Lippert R."/>
            <person name="Walenz B."/>
            <person name="Shatkay H."/>
            <person name="Dew I."/>
            <person name="Miller J.R."/>
            <person name="Flanigan M.J."/>
            <person name="Edwards N.J."/>
            <person name="Bolanos R."/>
            <person name="Fasulo D."/>
            <person name="Halldorsson B.V."/>
            <person name="Hannenhalli S."/>
            <person name="Turner R."/>
            <person name="Yooseph S."/>
            <person name="Lu F."/>
            <person name="Nusskern D.R."/>
            <person name="Shue B.C."/>
            <person name="Zheng X.H."/>
            <person name="Zhong F."/>
            <person name="Delcher A.L."/>
            <person name="Huson D.H."/>
            <person name="Kravitz S.A."/>
            <person name="Mouchard L."/>
            <person name="Reinert K."/>
            <person name="Remington K.A."/>
            <person name="Clark A.G."/>
            <person name="Waterman M.S."/>
            <person name="Eichler E.E."/>
            <person name="Adams M.D."/>
            <person name="Hunkapiller M.W."/>
            <person name="Myers E.W."/>
            <person name="Venter J.C."/>
        </authorList>
    </citation>
    <scope>NUCLEOTIDE SEQUENCE [LARGE SCALE GENOMIC DNA]</scope>
</reference>
<reference key="5">
    <citation type="journal article" date="2004" name="Genome Res.">
        <title>The status, quality, and expansion of the NIH full-length cDNA project: the Mammalian Gene Collection (MGC).</title>
        <authorList>
            <consortium name="The MGC Project Team"/>
        </authorList>
    </citation>
    <scope>NUCLEOTIDE SEQUENCE [LARGE SCALE MRNA] (ISOFORM 1)</scope>
    <source>
        <tissue>Lymph</tissue>
        <tissue>Placenta</tissue>
    </source>
</reference>
<reference key="6">
    <citation type="journal article" date="2001" name="DNA Res.">
        <title>Prediction of the coding sequences of unidentified human genes. XXII. The complete sequences of 50 new cDNA clones which code for large proteins.</title>
        <authorList>
            <person name="Nagase T."/>
            <person name="Kikuno R."/>
            <person name="Ohara O."/>
        </authorList>
    </citation>
    <scope>NUCLEOTIDE SEQUENCE [LARGE SCALE MRNA] OF 133-923 (ISOFORM 2)</scope>
    <source>
        <tissue>Brain</tissue>
    </source>
</reference>
<reference key="7">
    <citation type="journal article" date="2002" name="Proc. Natl. Acad. Sci. U.S.A.">
        <title>DBC2, a candidate for a tumor suppressor gene involved in breast cancer.</title>
        <authorList>
            <person name="Hamaguchi M."/>
            <person name="Meth J.L."/>
            <person name="von Klitzing C."/>
            <person name="Wei W."/>
            <person name="Esposito D."/>
            <person name="Rodgers L."/>
            <person name="Walsh T."/>
            <person name="Welcsh P."/>
            <person name="King M.C."/>
            <person name="Wigler M.H."/>
        </authorList>
    </citation>
    <scope>NUCLEOTIDE SEQUENCE [MRNA] OF 439-845</scope>
    <scope>TISSUE SPECIFICITY</scope>
</reference>
<reference key="8">
    <citation type="journal article" date="2006" name="Cell">
        <title>Global, in vivo, and site-specific phosphorylation dynamics in signaling networks.</title>
        <authorList>
            <person name="Olsen J.V."/>
            <person name="Blagoev B."/>
            <person name="Gnad F."/>
            <person name="Macek B."/>
            <person name="Kumar C."/>
            <person name="Mortensen P."/>
            <person name="Mann M."/>
        </authorList>
    </citation>
    <scope>PHOSPHORYLATION [LARGE SCALE ANALYSIS] AT SER-675; SER-678 AND SER-681</scope>
    <scope>IDENTIFICATION BY MASS SPECTROMETRY [LARGE SCALE ANALYSIS]</scope>
    <source>
        <tissue>Cervix carcinoma</tissue>
    </source>
</reference>
<reference key="9">
    <citation type="journal article" date="2008" name="J. Cell Sci.">
        <title>EML3 is a nuclear microtubule-binding protein required for the correct alignment of chromosomes in metaphase.</title>
        <authorList>
            <person name="Tegha-Dunghu J."/>
            <person name="Neumann B."/>
            <person name="Reber S."/>
            <person name="Krause R."/>
            <person name="Erfle H."/>
            <person name="Walter T."/>
            <person name="Held M."/>
            <person name="Rogers P."/>
            <person name="Hupfeld K."/>
            <person name="Ruppert T."/>
            <person name="Ellenberg J."/>
            <person name="Gruss O.J."/>
        </authorList>
    </citation>
    <scope>SUBCELLULAR LOCATION</scope>
</reference>
<reference key="10">
    <citation type="journal article" date="2008" name="Nature">
        <title>DBC1 is a negative regulator of SIRT1.</title>
        <authorList>
            <person name="Kim J.-E."/>
            <person name="Chen J."/>
            <person name="Lou Z."/>
        </authorList>
    </citation>
    <scope>FUNCTION AS SIRT1 INHIBITOR</scope>
    <scope>INTERACTION WITH SIRT1</scope>
    <scope>MUTAGENESIS OF 243-LEU--LEU-264</scope>
    <scope>IDENTIFICATION BY MASS SPECTROMETRY</scope>
</reference>
<reference key="11">
    <citation type="journal article" date="2008" name="Nature">
        <title>Negative regulation of the deacetylase SIRT1 by DBC1.</title>
        <authorList>
            <person name="Zhao W."/>
            <person name="Kruse J.-P."/>
            <person name="Tang Y."/>
            <person name="Jung S.Y."/>
            <person name="Qin J."/>
            <person name="Gu W."/>
        </authorList>
    </citation>
    <scope>FUNCTION IN APOPTOSIS</scope>
    <scope>INTERACTION WITH SIRT1</scope>
</reference>
<reference key="12">
    <citation type="journal article" date="2008" name="Proc. Natl. Acad. Sci. U.S.A.">
        <title>A quantitative atlas of mitotic phosphorylation.</title>
        <authorList>
            <person name="Dephoure N."/>
            <person name="Zhou C."/>
            <person name="Villen J."/>
            <person name="Beausoleil S.A."/>
            <person name="Bakalarski C.E."/>
            <person name="Elledge S.J."/>
            <person name="Gygi S.P."/>
        </authorList>
    </citation>
    <scope>PHOSPHORYLATION [LARGE SCALE ANALYSIS] AT SER-124; SER-675; SER-678 AND SER-681</scope>
    <scope>IDENTIFICATION BY MASS SPECTROMETRY [LARGE SCALE ANALYSIS]</scope>
    <source>
        <tissue>Cervix carcinoma</tissue>
    </source>
</reference>
<reference key="13">
    <citation type="journal article" date="2009" name="Anal. Chem.">
        <title>Lys-N and trypsin cover complementary parts of the phosphoproteome in a refined SCX-based approach.</title>
        <authorList>
            <person name="Gauci S."/>
            <person name="Helbig A.O."/>
            <person name="Slijper M."/>
            <person name="Krijgsveld J."/>
            <person name="Heck A.J."/>
            <person name="Mohammed S."/>
        </authorList>
    </citation>
    <scope>IDENTIFICATION BY MASS SPECTROMETRY [LARGE SCALE ANALYSIS]</scope>
</reference>
<reference key="14">
    <citation type="journal article" date="2009" name="J. Biol. Chem.">
        <title>Identification and characterization of a novel nuclear protein complex involved in nuclear hormone receptor-mediated gene regulation.</title>
        <authorList>
            <person name="Garapaty S."/>
            <person name="Xu C.F."/>
            <person name="Trojer P."/>
            <person name="Mahajan M.A."/>
            <person name="Neubert T.A."/>
            <person name="Samuels H.H."/>
        </authorList>
    </citation>
    <scope>FUNCTION</scope>
    <scope>IDENTIFICATION IN A NUCLEAR RECEPTOR HORMONE COMPLEX</scope>
    <scope>INTERACTION WITH ZNF335; ASH2L; EMSY</scope>
</reference>
<reference key="15">
    <citation type="journal article" date="2009" name="J. Biol. Chem.">
        <title>Inhibition of SUV39H1 methyltransferase activity by DBC1.</title>
        <authorList>
            <person name="Li Z."/>
            <person name="Chen L."/>
            <person name="Kabra N."/>
            <person name="Wang C."/>
            <person name="Fang J."/>
            <person name="Chen J."/>
        </authorList>
    </citation>
    <scope>FUNCTION AS SUV39H1 INHIBITOR</scope>
    <scope>INTERACTION WITH SUV39H1</scope>
</reference>
<reference key="16">
    <citation type="journal article" date="2009" name="Sci. Signal.">
        <title>Quantitative phosphoproteomic analysis of T cell receptor signaling reveals system-wide modulation of protein-protein interactions.</title>
        <authorList>
            <person name="Mayya V."/>
            <person name="Lundgren D.H."/>
            <person name="Hwang S.-I."/>
            <person name="Rezaul K."/>
            <person name="Wu L."/>
            <person name="Eng J.K."/>
            <person name="Rodionov V."/>
            <person name="Han D.K."/>
        </authorList>
    </citation>
    <scope>PHOSPHORYLATION [LARGE SCALE ANALYSIS] AT THR-35; SER-675; SER-678 AND SER-681</scope>
    <scope>IDENTIFICATION BY MASS SPECTROMETRY [LARGE SCALE ANALYSIS]</scope>
    <source>
        <tissue>Leukemic T-cell</tissue>
    </source>
</reference>
<reference key="17">
    <citation type="journal article" date="2009" name="Science">
        <title>Lysine acetylation targets protein complexes and co-regulates major cellular functions.</title>
        <authorList>
            <person name="Choudhary C."/>
            <person name="Kumar C."/>
            <person name="Gnad F."/>
            <person name="Nielsen M.L."/>
            <person name="Rehman M."/>
            <person name="Walther T.C."/>
            <person name="Olsen J.V."/>
            <person name="Mann M."/>
        </authorList>
    </citation>
    <scope>ACETYLATION [LARGE SCALE ANALYSIS] AT LYS-215</scope>
    <scope>IDENTIFICATION BY MASS SPECTROMETRY [LARGE SCALE ANALYSIS]</scope>
</reference>
<reference key="18">
    <citation type="journal article" date="2010" name="Biochem. Biophys. Res. Commun.">
        <title>Repression of estrogen receptor beta function by putative tumor suppressor DBC1.</title>
        <authorList>
            <person name="Koyama S."/>
            <person name="Wada-Hiraike O."/>
            <person name="Nakagawa S."/>
            <person name="Tanikawa M."/>
            <person name="Hiraike H."/>
            <person name="Miyamoto Y."/>
            <person name="Sone K."/>
            <person name="Oda K."/>
            <person name="Fukuhara H."/>
            <person name="Nakagawa K."/>
            <person name="Kato S."/>
            <person name="Yano T."/>
            <person name="Taketani Y."/>
        </authorList>
    </citation>
    <scope>FUNCTION</scope>
    <scope>SUBCELLULAR LOCATION</scope>
    <scope>INTERACTION WITH ESR1 AND ESR2</scope>
</reference>
<reference key="19">
    <citation type="journal article" date="2010" name="Br. J. Cancer">
        <title>Identification of DBC1 as a transcriptional repressor for BRCA1.</title>
        <authorList>
            <person name="Hiraike H."/>
            <person name="Wada-Hiraike O."/>
            <person name="Nakagawa S."/>
            <person name="Koyama S."/>
            <person name="Miyamoto Y."/>
            <person name="Sone K."/>
            <person name="Tanikawa M."/>
            <person name="Tsuruga T."/>
            <person name="Nagasaka K."/>
            <person name="Matsumoto Y."/>
            <person name="Oda K."/>
            <person name="Shoji K."/>
            <person name="Fukuhara H."/>
            <person name="Saji S."/>
            <person name="Nakagawa K."/>
            <person name="Kato S."/>
            <person name="Yano T."/>
            <person name="Taketani Y."/>
        </authorList>
    </citation>
    <scope>FUNCTION</scope>
    <scope>INTERACTION WITH BRCA1</scope>
    <scope>SUBCELLULAR LOCATION</scope>
</reference>
<reference key="20">
    <citation type="journal article" date="2010" name="J. Biol. Chem.">
        <title>HDAC3 is negatively regulated by the nuclear protein DBC1.</title>
        <authorList>
            <person name="Chini C.C."/>
            <person name="Escande C."/>
            <person name="Nin V."/>
            <person name="Chini E.N."/>
        </authorList>
    </citation>
    <scope>FUNCTION</scope>
    <scope>INTERACTION WITH HDAC1; HDAC3; SIRT1 AND MEF2D</scope>
</reference>
<reference key="21">
    <citation type="journal article" date="2010" name="Sci. Signal.">
        <title>Quantitative phosphoproteomics reveals widespread full phosphorylation site occupancy during mitosis.</title>
        <authorList>
            <person name="Olsen J.V."/>
            <person name="Vermeulen M."/>
            <person name="Santamaria A."/>
            <person name="Kumar C."/>
            <person name="Miller M.L."/>
            <person name="Jensen L.J."/>
            <person name="Gnad F."/>
            <person name="Cox J."/>
            <person name="Jensen T.S."/>
            <person name="Nigg E.A."/>
            <person name="Brunak S."/>
            <person name="Mann M."/>
        </authorList>
    </citation>
    <scope>PHOSPHORYLATION [LARGE SCALE ANALYSIS] AT THR-35; SER-124; SER-675; SER-678 AND SER-681</scope>
    <scope>IDENTIFICATION BY MASS SPECTROMETRY [LARGE SCALE ANALYSIS]</scope>
    <source>
        <tissue>Cervix carcinoma</tissue>
    </source>
</reference>
<reference key="22">
    <citation type="journal article" date="2011" name="BMC Syst. Biol.">
        <title>Initial characterization of the human central proteome.</title>
        <authorList>
            <person name="Burkard T.R."/>
            <person name="Planyavsky M."/>
            <person name="Kaupe I."/>
            <person name="Breitwieser F.P."/>
            <person name="Buerckstuemmer T."/>
            <person name="Bennett K.L."/>
            <person name="Superti-Furga G."/>
            <person name="Colinge J."/>
        </authorList>
    </citation>
    <scope>IDENTIFICATION BY MASS SPECTROMETRY [LARGE SCALE ANALYSIS]</scope>
</reference>
<reference key="23">
    <citation type="journal article" date="2011" name="Sci. Signal.">
        <title>System-wide temporal characterization of the proteome and phosphoproteome of human embryonic stem cell differentiation.</title>
        <authorList>
            <person name="Rigbolt K.T."/>
            <person name="Prokhorova T.A."/>
            <person name="Akimov V."/>
            <person name="Henningsen J."/>
            <person name="Johansen P.T."/>
            <person name="Kratchmarova I."/>
            <person name="Kassem M."/>
            <person name="Mann M."/>
            <person name="Olsen J.V."/>
            <person name="Blagoev B."/>
        </authorList>
    </citation>
    <scope>PHOSPHORYLATION [LARGE SCALE ANALYSIS] AT SER-678</scope>
    <scope>IDENTIFICATION BY MASS SPECTROMETRY [LARGE SCALE ANALYSIS]</scope>
</reference>
<reference key="24">
    <citation type="journal article" date="2012" name="J. Mol. Cell Biol.">
        <title>DBC1 phosphorylation by ATM/ATR inhibits SIRT1 deacetylase in response to DNA damage.</title>
        <authorList>
            <person name="Zannini L."/>
            <person name="Buscemi G."/>
            <person name="Kim J.E."/>
            <person name="Fontanella E."/>
            <person name="Delia D."/>
        </authorList>
    </citation>
    <scope>PHOSPHORYLATION AT THR-454</scope>
    <scope>MUTAGENESIS OF THR-454</scope>
    <scope>INTERACTION WITH SIRT1</scope>
</reference>
<reference key="25">
    <citation type="journal article" date="2012" name="Nature">
        <title>DBIRD complex integrates alternative mRNA splicing with RNA polymerase II transcript elongation.</title>
        <authorList>
            <person name="Close P."/>
            <person name="East P."/>
            <person name="Dirac-Svejstrup A.B."/>
            <person name="Hartmann H."/>
            <person name="Heron M."/>
            <person name="Maslen S."/>
            <person name="Chariot A."/>
            <person name="Soding J."/>
            <person name="Skehel M."/>
            <person name="Svejstrup J.Q."/>
        </authorList>
    </citation>
    <scope>IDENTIFICATION IN THE DBIRD COMPLEX</scope>
    <scope>FUNCTION</scope>
    <scope>INTERACTION WITH ZNF326</scope>
</reference>
<reference key="26">
    <citation type="journal article" date="2013" name="Biochem. J.">
        <title>DBC1 (Deleted in Breast Cancer 1) modulates the stability and function of the nuclear receptor Rev-erbalpha.</title>
        <authorList>
            <person name="Chini C.C."/>
            <person name="Escande C."/>
            <person name="Nin V."/>
            <person name="Chini E.N."/>
        </authorList>
    </citation>
    <scope>FUNCTION</scope>
    <scope>INTERACTION WITH NR1D1</scope>
</reference>
<reference key="27">
    <citation type="journal article" date="2013" name="Biosci. Rep.">
        <title>Deleted in breast cancer-1 (DBC-1) in the interface between metabolism, aging and cancer.</title>
        <authorList>
            <person name="Chini E.N."/>
            <person name="Chini C.C."/>
            <person name="Nin V."/>
            <person name="Escande C."/>
        </authorList>
    </citation>
    <scope>REVIEW</scope>
</reference>
<reference key="28">
    <citation type="journal article" date="2013" name="Cancer Lett.">
        <title>Deleted in breast cancer 1 (DBC1) deficiency results in apoptosis of breast cancer cells through impaired responses to UV-induced DNA damage.</title>
        <authorList>
            <person name="Kim W."/>
            <person name="Kim J.E."/>
        </authorList>
    </citation>
    <scope>FUNCTION</scope>
    <scope>SUBCELLULAR LOCATION</scope>
    <scope>INTERACTION WITH SIRT1</scope>
</reference>
<reference key="29">
    <citation type="journal article" date="2013" name="J. Proteome Res.">
        <title>Toward a comprehensive characterization of a human cancer cell phosphoproteome.</title>
        <authorList>
            <person name="Zhou H."/>
            <person name="Di Palma S."/>
            <person name="Preisinger C."/>
            <person name="Peng M."/>
            <person name="Polat A.N."/>
            <person name="Heck A.J."/>
            <person name="Mohammed S."/>
        </authorList>
    </citation>
    <scope>PHOSPHORYLATION [LARGE SCALE ANALYSIS] AT SER-124; THR-454; SER-569; SER-675; SER-678; SER-681; SER-687; SER-808 AND THR-897</scope>
    <scope>IDENTIFICATION BY MASS SPECTROMETRY [LARGE SCALE ANALYSIS]</scope>
    <source>
        <tissue>Cervix carcinoma</tissue>
        <tissue>Erythroleukemia</tissue>
    </source>
</reference>
<reference key="30">
    <citation type="journal article" date="2013" name="J. Proteomics Bioinform.">
        <title>A functional proteomics perspective of dbc1 as a regulator of transcription.</title>
        <authorList>
            <person name="Joshi P."/>
            <person name="Quach O.L."/>
            <person name="Giguere S.S."/>
            <person name="Cristea I.M."/>
        </authorList>
    </citation>
    <scope>REVIEW</scope>
</reference>
<reference key="31">
    <citation type="journal article" date="2013" name="Mol. Cell. Biol.">
        <title>hMOF acetylation of DBC1/CCAR2 prevents binding and inhibition of SirT1.</title>
        <authorList>
            <person name="Zheng H."/>
            <person name="Yang L."/>
            <person name="Peng L."/>
            <person name="Izumi V."/>
            <person name="Koomen J."/>
            <person name="Seto E."/>
            <person name="Chen J."/>
        </authorList>
    </citation>
    <scope>ACETYLATION AT LYS-112 AND LYS-215</scope>
    <scope>INTERACTION WITH SIRT1</scope>
</reference>
<reference key="32">
    <citation type="journal article" date="2014" name="J. Biol. Chem.">
        <title>Deleted in breast cancer 1 (DBC1) protein regulates hepatic gluconeogenesis.</title>
        <authorList>
            <person name="Nin V."/>
            <person name="Chini C.C."/>
            <person name="Escande C."/>
            <person name="Capellini V."/>
            <person name="Chini E.N."/>
        </authorList>
    </citation>
    <scope>FUNCTION</scope>
</reference>
<reference key="33">
    <citation type="journal article" date="2014" name="J. Proteomics">
        <title>An enzyme assisted RP-RPLC approach for in-depth analysis of human liver phosphoproteome.</title>
        <authorList>
            <person name="Bian Y."/>
            <person name="Song C."/>
            <person name="Cheng K."/>
            <person name="Dong M."/>
            <person name="Wang F."/>
            <person name="Huang J."/>
            <person name="Sun D."/>
            <person name="Wang L."/>
            <person name="Ye M."/>
            <person name="Zou H."/>
        </authorList>
    </citation>
    <scope>PHOSPHORYLATION [LARGE SCALE ANALYSIS] AT THR-484; SER-569; SER-627 AND SER-687</scope>
    <scope>IDENTIFICATION BY MASS SPECTROMETRY [LARGE SCALE ANALYSIS]</scope>
    <source>
        <tissue>Liver</tissue>
    </source>
</reference>
<reference key="34">
    <citation type="journal article" date="2014" name="Mol. Cell. Proteomics">
        <title>Immunoaffinity enrichment and mass spectrometry analysis of protein methylation.</title>
        <authorList>
            <person name="Guo A."/>
            <person name="Gu H."/>
            <person name="Zhou J."/>
            <person name="Mulhern D."/>
            <person name="Wang Y."/>
            <person name="Lee K.A."/>
            <person name="Yang V."/>
            <person name="Aguiar M."/>
            <person name="Kornhauser J."/>
            <person name="Jia X."/>
            <person name="Ren J."/>
            <person name="Beausoleil S.A."/>
            <person name="Silva J.C."/>
            <person name="Vemulapalli V."/>
            <person name="Bedford M.T."/>
            <person name="Comb M.J."/>
        </authorList>
    </citation>
    <scope>METHYLATION [LARGE SCALE ANALYSIS] AT LYS-123 AND ARG-180</scope>
    <scope>IDENTIFICATION BY MASS SPECTROMETRY [LARGE SCALE ANALYSIS]</scope>
    <source>
        <tissue>Colon carcinoma</tissue>
    </source>
</reference>
<reference key="35">
    <citation type="journal article" date="2014" name="Nat. Commun.">
        <title>Modification of DBC1 by SUMO2/3 is crucial for p53-mediated apoptosis in response to DNA damage.</title>
        <authorList>
            <person name="Park J.H."/>
            <person name="Lee S.W."/>
            <person name="Yang S.W."/>
            <person name="Yoo H.M."/>
            <person name="Park J.M."/>
            <person name="Seong M.W."/>
            <person name="Ka S.H."/>
            <person name="Oh K.H."/>
            <person name="Jeon Y.J."/>
            <person name="Chung C.H."/>
        </authorList>
    </citation>
    <scope>SUMOYLATION AT LYS-591</scope>
    <scope>DESUMOYLATION</scope>
    <scope>PHOSPHORYLATION AT THR-454</scope>
    <scope>MUTAGENESIS OF THR-454; LYS-591; LYS-667 AND LYS-839</scope>
    <scope>INTERACTION WITH SIRT1; PSIA3 AND SENP1</scope>
</reference>
<reference key="36">
    <citation type="journal article" date="2014" name="Nat. Struct. Mol. Biol.">
        <title>Uncovering global SUMOylation signaling networks in a site-specific manner.</title>
        <authorList>
            <person name="Hendriks I.A."/>
            <person name="D'Souza R.C."/>
            <person name="Yang B."/>
            <person name="Verlaan-de Vries M."/>
            <person name="Mann M."/>
            <person name="Vertegaal A.C."/>
        </authorList>
    </citation>
    <scope>SUMOYLATION [LARGE SCALE ANALYSIS] AT LYS-591</scope>
    <scope>IDENTIFICATION BY MASS SPECTROMETRY [LARGE SCALE ANALYSIS]</scope>
</reference>
<reference key="37">
    <citation type="journal article" date="2014" name="Nucleic Acids Res.">
        <title>Chk2 and REGgamma-dependent DBC1 regulation in DNA damage induced apoptosis.</title>
        <authorList>
            <person name="Magni M."/>
            <person name="Ruscica V."/>
            <person name="Buscemi G."/>
            <person name="Kim J.E."/>
            <person name="Nachimuthu B.T."/>
            <person name="Fontanella E."/>
            <person name="Delia D."/>
            <person name="Zannini L."/>
        </authorList>
    </citation>
    <scope>FUNCTION</scope>
    <scope>INTERACTION WITH CHEK2 AND PSEM3</scope>
</reference>
<reference key="38">
    <citation type="journal article" date="2015" name="Cell Rep.">
        <title>DBC1 functions as a tumor suppressor by regulating p53 stability.</title>
        <authorList>
            <person name="Qin B."/>
            <person name="Minter-Dykhouse K."/>
            <person name="Yu J."/>
            <person name="Zhang J."/>
            <person name="Liu T."/>
            <person name="Zhang H."/>
            <person name="Lee S."/>
            <person name="Kim J."/>
            <person name="Wang L."/>
            <person name="Lou Z."/>
        </authorList>
    </citation>
    <scope>FUNCTION</scope>
    <scope>INTERACTION WITH TP53</scope>
</reference>
<reference key="39">
    <citation type="journal article" date="2015" name="Int. J. Cancer">
        <title>MCC inhibits beta-catenin transcriptional activity by sequestering DBC1 in the cytoplasm.</title>
        <authorList>
            <person name="Pangon L."/>
            <person name="Mladenova D."/>
            <person name="Watkins L."/>
            <person name="Van Kralingen C."/>
            <person name="Currey N."/>
            <person name="Al-Sohaily S."/>
            <person name="Lecine P."/>
            <person name="Borg J.P."/>
            <person name="Kohonen-Corish M.R."/>
        </authorList>
    </citation>
    <scope>FUNCTION</scope>
    <scope>SUBCELLULAR LOCATION</scope>
    <scope>INTERACTION WITH MCC</scope>
</reference>
<reference key="40">
    <citation type="journal article" date="2015" name="Int. J. Cancer">
        <title>CK2alpha phosphorylates DBC1 and is involved in the progression of gastric carcinoma and predicts poor survival of gastric carcinoma patients.</title>
        <authorList>
            <person name="Bae J.S."/>
            <person name="Park S.H."/>
            <person name="Kim K.M."/>
            <person name="Kwon K.S."/>
            <person name="Kim C.Y."/>
            <person name="Lee H.K."/>
            <person name="Park B.H."/>
            <person name="Park H.S."/>
            <person name="Lee H."/>
            <person name="Moon W.S."/>
            <person name="Chung M.J."/>
            <person name="Sylvester K.G."/>
            <person name="Jang K.Y."/>
        </authorList>
    </citation>
    <scope>PHOSPHORYLATION AT THR-454</scope>
    <scope>MUTAGENESIS OF THR-454</scope>
    <scope>SUBCELLULAR LOCATION</scope>
    <scope>TISSUE SPECIFICITY</scope>
    <scope>INTERACTION WITH CSNK2A1</scope>
</reference>
<reference key="41">
    <citation type="journal article" date="2015" name="J. Steroid Biochem. Mol. Biol.">
        <title>CCAR2 negatively regulates nuclear receptor LXRalpha by competing with SIRT1 deacetylase.</title>
        <authorList>
            <person name="Sakurabashi A."/>
            <person name="Wada-Hiraike O."/>
            <person name="Hirano M."/>
            <person name="Fu H."/>
            <person name="Isono W."/>
            <person name="Fukuda T."/>
            <person name="Morita Y."/>
            <person name="Tanikawa M."/>
            <person name="Miyamoto Y."/>
            <person name="Oda K."/>
            <person name="Kawana K."/>
            <person name="Osuga Y."/>
            <person name="Fujii T."/>
        </authorList>
    </citation>
    <scope>FUNCTION</scope>
    <scope>SUBCELLULAR LOCATION</scope>
    <scope>INTERACTION WITH NR1H2 AND NR1H3</scope>
</reference>
<reference key="42">
    <citation type="journal article" date="2017" name="Nat. Struct. Mol. Biol.">
        <title>Site-specific mapping of the human SUMO proteome reveals co-modification with phosphorylation.</title>
        <authorList>
            <person name="Hendriks I.A."/>
            <person name="Lyon D."/>
            <person name="Young C."/>
            <person name="Jensen L.J."/>
            <person name="Vertegaal A.C."/>
            <person name="Nielsen M.L."/>
        </authorList>
    </citation>
    <scope>SUMOYLATION [LARGE SCALE ANALYSIS] AT LYS-591</scope>
    <scope>IDENTIFICATION BY MASS SPECTROMETRY [LARGE SCALE ANALYSIS]</scope>
</reference>
<proteinExistence type="evidence at protein level"/>
<protein>
    <recommendedName>
        <fullName>Cell cycle and apoptosis regulator protein 2</fullName>
    </recommendedName>
    <alternativeName>
        <fullName>Cell division cycle and apoptosis regulator protein 2</fullName>
    </alternativeName>
    <alternativeName>
        <fullName>DBIRD complex subunit KIAA1967</fullName>
    </alternativeName>
    <alternativeName>
        <fullName>Deleted in breast cancer gene 1 protein</fullName>
        <shortName>DBC-1</shortName>
        <shortName>DBC.1</shortName>
    </alternativeName>
    <alternativeName>
        <fullName>NET35</fullName>
    </alternativeName>
    <alternativeName>
        <fullName>p30 DBC</fullName>
    </alternativeName>
</protein>
<gene>
    <name type="primary">CCAR2</name>
    <name type="synonym">DBC1</name>
    <name type="synonym">KIAA1967</name>
</gene>
<comment type="function">
    <text evidence="5 6 8 9 10 11 12 13 15 16 18 19 21 23 24">Core component of the DBIRD complex, a multiprotein complex that acts at the interface between core mRNP particles and RNA polymerase II (RNAPII) and integrates transcript elongation with the regulation of alternative splicing: the DBIRD complex affects local transcript elongation rates and alternative splicing of a large set of exons embedded in (A + T)-rich DNA regions (PubMed:22446626). Inhibits SIRT1 deacetylase activity leading to increasing levels of p53/TP53 acetylation and p53-mediated apoptosis (PubMed:18235501, PubMed:18235502, PubMed:23352644). Inhibits SUV39H1 methyltransferase activity (PubMed:19218236). Mediates ligand-dependent transcriptional activation by nuclear hormone receptors (PubMed:19131338). Plays a critical role in maintaining genomic stability and cellular integrity following UV-induced genotoxic stress (PubMed:23398316). Regulates the circadian expression of the core clock components NR1D1 and BMAL1 (PubMed:23398316). Enhances the transcriptional repressor activity of NR1D1 through stabilization of NR1D1 protein levels by preventing its ubiquitination and subsequent degradation (PubMed:23398316). Represses the ligand-dependent transcriptional activation function of ESR2 (PubMed:20074560). Acts as a regulator of PCK1 expression and gluconeogenesis by a mechanism that involves, at least in part, both NR1D1 and SIRT1 (PubMed:24415752). Negatively regulates the deacetylase activity of HDAC3 and can alter its subcellular localization (PubMed:21030595). Positively regulates the beta-catenin pathway (canonical Wnt signaling pathway) and is required for MCC-mediated repression of the beta-catenin pathway (PubMed:24824780). Represses ligand-dependent transcriptional activation function of NR1H2 and NR1H3 and inhibits the interaction of SIRT1 with NR1H3 (PubMed:25661920). Plays an important role in tumor suppression through p53/TP53 regulation; stabilizes p53/TP53 by affecting its interaction with ubiquitin ligase MDM2 (PubMed:25732823). Represses the transcriptional activator activity of BRCA1 (PubMed:20160719). Inhibits SIRT1 in a CHEK2 and PSEM3-dependent manner and inhibits the activity of CHEK2 in vitro (PubMed:25361978).</text>
</comment>
<comment type="subunit">
    <text evidence="1 5 6 8 9 10 11 12 13 14 15 16 17 19 20 21 22 23 24">Component of the DBIRD complex (PubMed:22446626). Interacts with ZNF326/ZIRD; the interaction is direct (PubMed:22446626). Interacts (via N-terminus) with SIRT1, which inhibits the deacetylation of substrates (PubMed:18235501, PubMed:18235502, PubMed:21030595, PubMed:22735644, PubMed:23352644, PubMed:24126058, PubMed:25406032). Interacts (via N-terminus) with SUV39H1; this interaction abolishes the interaction with SIRT1 (PubMed:19218236). Component of a nuclear receptor-mediated transcription complex composed of at least ZNF335, CCAR2 and EMSY; the complex stimulates the transcription of nuclear receptor target genes such as SOX9 and HOXA1 (PubMed:19131338). Within the complex interacts with EMSY and interacts with ZNF335 (via C-terminus) (PubMed:19131338). Components of this complex may associate with components of a histone methylation complex to form a complex at least composed of ZNF335, HCFC1, CCAR2, EMSY, MKI67, RBBP5, ASH2L and WDR5 (PubMed:19131338). Within this complex, interacts with ASH2L (PubMed:19131338). Interacts with NR1D1 (PubMed:23398316). Interacts (via N-terminus) with ESR1 and ESR2 (PubMed:20074560). Interacts (via N-terminus) with HDAC3 (via C-terminus) (PubMed:21030595). Interacts with HDAC1 and MED2F (PubMed:21030595). Interacts with MCC (PubMed:24824780). Interacts (via N-terminus) with NR1H2 and NR1H3 in a ligand-independent manner (PubMed:25661920). Interacts with CSNK2A1 (PubMed:24962073). Interacts (via N-terminus) with p53/TP53 (PubMed:25732823). Interacts (via N-terminus) with BRCA1 (via the BRCT domains) (PubMed:20160719). Interacts (via N-terminus) with CHEK2 (via protein kinase domain) (PubMed:25361978). Interacts with PSEM3 (PubMed:25361978). Interacts (via N-terminus) with PSIA3 and SENP1 (PubMed:25406032). The sumoylated form shows a preferential interaction with SIRT1 as compared to its unmodified form (PubMed:25406032). Interacts with CECR2; may form part of the CERF-1 and/or CEF-5 ISWI chromatin remodeling complexes in embryonic stem cells (By similarity).</text>
</comment>
<comment type="interaction">
    <interactant intactId="EBI-355410">
        <id>Q8N163</id>
    </interactant>
    <interactant intactId="EBI-447544">
        <id>P01106</id>
        <label>MYC</label>
    </interactant>
    <organismsDiffer>false</organismsDiffer>
    <experiments>8</experiments>
</comment>
<comment type="interaction">
    <interactant intactId="EBI-355410">
        <id>Q8N163</id>
    </interactant>
    <interactant intactId="EBI-1802965">
        <id>Q96EB6</id>
        <label>SIRT1</label>
    </interactant>
    <organismsDiffer>false</organismsDiffer>
    <experiments>16</experiments>
</comment>
<comment type="interaction">
    <interactant intactId="EBI-355410">
        <id>Q8N163</id>
    </interactant>
    <interactant intactId="EBI-711909">
        <id>P02766</id>
        <label>TTR</label>
    </interactant>
    <organismsDiffer>false</organismsDiffer>
    <experiments>3</experiments>
</comment>
<comment type="interaction">
    <interactant intactId="EBI-355410">
        <id>Q8N163</id>
    </interactant>
    <interactant intactId="EBI-720609">
        <id>O76024</id>
        <label>WFS1</label>
    </interactant>
    <organismsDiffer>false</organismsDiffer>
    <experiments>3</experiments>
</comment>
<comment type="interaction">
    <interactant intactId="EBI-355410">
        <id>Q8N163</id>
    </interactant>
    <interactant intactId="EBI-2795590">
        <id>Q9H4Z2</id>
        <label>ZNF335</label>
    </interactant>
    <organismsDiffer>false</organismsDiffer>
    <experiments>5</experiments>
</comment>
<comment type="interaction">
    <interactant intactId="EBI-355410">
        <id>Q8N163</id>
    </interactant>
    <interactant intactId="EBI-6248094">
        <id>Q9Q2G4</id>
        <label>ORF</label>
    </interactant>
    <organismsDiffer>true</organismsDiffer>
    <experiments>5</experiments>
</comment>
<comment type="subcellular location">
    <subcellularLocation>
        <location evidence="7 10 11 15 19 20 23">Nucleus</location>
    </subcellularLocation>
    <subcellularLocation>
        <location evidence="11 19">Cytoplasm</location>
    </subcellularLocation>
    <subcellularLocation>
        <location evidence="7">Cytoplasm</location>
        <location evidence="7">Cytoskeleton</location>
        <location evidence="7">Spindle</location>
    </subcellularLocation>
    <text evidence="11 19">Recruited to chromatin, post-UV irradiation. Sequestered to the cytoplasm in the presence of MCC. Translocated to the cytoplasm during UV-induced apoptosis.</text>
</comment>
<comment type="alternative products">
    <event type="alternative splicing"/>
    <isoform>
        <id>Q8N163-1</id>
        <name>1</name>
        <sequence type="displayed"/>
    </isoform>
    <isoform>
        <id>Q8N163-2</id>
        <name>2</name>
        <sequence type="described" ref="VSP_017092"/>
    </isoform>
</comment>
<comment type="tissue specificity">
    <text evidence="4 20">Expressed in gastric carcinoma tissue and the expression gradually increases with the progression of the carcinoma (at protein level). Expressed ubiquitously in normal tissues. Expressed in 84 to 100% of neoplastic breast, lung, and colon tissues.</text>
</comment>
<comment type="PTM">
    <text evidence="14 22">ATM/ATR-mediated phosphorylation at Thr-454 upon DNA damage promotes binding to SIRT1. Phosphorylation at Thr-454 promotes its sumoylation by switching the binding partner of CCAR2 from SENP1 to PIAS3.</text>
</comment>
<comment type="PTM">
    <text evidence="17">Acetylation at Lys-112 and Lys-215 by KAT8 prevents inhibitory binding to SIRT1 and increases its deacetylase activity.</text>
</comment>
<comment type="PTM">
    <text evidence="22">Genotoxic stress induces its sumoylation and sumoylation promotes the SIRT1-CCAR2 interaction which in turn inhibits SIRT1-mediated deacetylation of p53/TP53. Sumoylation leads to transcriptional activation of p53/TP53 by sequestering SIRT1 from p53/TP53. Desumoylated by SENP1.</text>
</comment>
<comment type="sequence caution" evidence="26">
    <conflict type="frameshift">
        <sequence resource="EMBL-CDS" id="AAG02472"/>
    </conflict>
</comment>
<comment type="sequence caution" evidence="26">
    <conflict type="erroneous initiation">
        <sequence resource="EMBL-CDS" id="BAB85553"/>
    </conflict>
    <text>Extended N-terminus.</text>
</comment>
<comment type="online information" name="Atlas of Genetics and Cytogenetics in Oncology and Haematology">
    <link uri="https://atlasgeneticsoncology.org/gene/46056/KIAA1967"/>
</comment>
<sequence>MSQFKRQRINPLPGGRNFSGTASTSLLGPPPGLLTPPVATELSQNARHLQGGEKQRVFTGIVTSLHDYFGVVDEEVFFQLSVVKGRLPQLGEKVLVKAAYNPGQAVPWNAVKVQTLSNQPLLKSPAPPLLHVAALGQKQGILGAQPQLIFQPHRIPPLFPQKPLSLFQTSHTLHLSHLNRFPARGPHGRLDQGRSDDYDSKKRKQRAGGEPWGAKKPRHDLPPYRVHLTPYTVDSPICDFLELQRRYRSLLVPSDFLSVHLSWLSAFPLSQPFSLHHPSRIQVSSEKEAAPDAGAEPITADSDPAYSSKVLLLSSPGLEELYRCCMLFVDDMAEPRETPEHPLKQIKFLLGRKEEEAVLVGGEWSPSLDGLDPQADPQVLVRTAIRCAQAQTGIDLSGCTKWWRFAEFQYLQPGPPRRLQTVVVYLPDVWTIMPTLEEWEALCQQKAAEAAPPTQEAQGETEPTEQAPDALEQAADTSRRNAETPEATTQQETDTDLPEAPPPPLEPAVIARPGCVNLSLHGIVEDRRPKERISFEVMVLAELFLEMLQRDFGYRVYKMLLSLPEKVVSPPEPEKEEAAKEEATKEEEAIKEEVVKEPKDEAQNEGPATESEAPLKEDGLLPKPLSSGGEEEEKPRGEASEDLCEMALDPELLLLRDDGEEEFAGAKLEDSEVRSVASNQSEMEFSSLQDMPKELDPSAVLPLDCLLAFVFFDANWCGYLHRRDLERILLTLGIRLSAEQAKQLVSRVVTQNICQYRSLQYSRQEGLDGGLPEEVLFGNLDLLPPPGKSTKPGAAPTEHKALVSHNGSLINVGSLLQRAEQQDSGRLYLENKIHTLELKLEESHNRFSATEVTNKTLAAEMQELRVRLAEAEETARTAERQKSQLQRLLQELRRRLTPLQLEIQRVVEKADSWVEKEEPAPSN</sequence>